<sequence>MSKFPTISEILSGKVAVGEEVAVRGWVRTRRDSKAGLSFLAVYDGSCFDPIQAIINNDLSNYQDEVLRLTAGCSVIVTGVIVESPAEGQAVELQAKSVEVVGWVEDPDTYPMAAKRHSIEYLREVAHLRPRTNLIGAVARVRHCLAQAIHRFFHEQGFYWVATPLITASDTEGAGEMFRVSTLDLENLPRGEDGKVDFSQDFFGRESFLTVSGQLNGETYACALSKVYTFGPTFRAENSNTTRHLAEFWMVEPEFAFATLADNAKLAEDMLKYVFRAVLEERKDDLKFFEKHIDNTVISRLENFINSDFAQIDYTDAIEVLLKSGKNFEFPVEWGIDLSSEHERFLAEEYFKSPVVVKNYPKDIKAFYMRLNDDGKTVAAMDVLAPGIGEIIGGSQREERLEVLDKRMVEMGLNPEDYWWYRDLRRYGTVPHSGFGLGFERLIVYVTGLQNIREVIPFPRAPRNANF</sequence>
<dbReference type="EC" id="6.1.1.22" evidence="1"/>
<dbReference type="EMBL" id="CP001321">
    <property type="protein sequence ID" value="ACL32037.1"/>
    <property type="molecule type" value="Genomic_DNA"/>
</dbReference>
<dbReference type="RefSeq" id="WP_012621688.1">
    <property type="nucleotide sequence ID" value="NC_011852.1"/>
</dbReference>
<dbReference type="SMR" id="B8F3Y5"/>
<dbReference type="STRING" id="557723.HAPS_0354"/>
<dbReference type="KEGG" id="hap:HAPS_0354"/>
<dbReference type="PATRIC" id="fig|557723.8.peg.360"/>
<dbReference type="HOGENOM" id="CLU_004553_2_0_6"/>
<dbReference type="Proteomes" id="UP000006743">
    <property type="component" value="Chromosome"/>
</dbReference>
<dbReference type="GO" id="GO:0005737">
    <property type="term" value="C:cytoplasm"/>
    <property type="evidence" value="ECO:0007669"/>
    <property type="project" value="UniProtKB-SubCell"/>
</dbReference>
<dbReference type="GO" id="GO:0004816">
    <property type="term" value="F:asparagine-tRNA ligase activity"/>
    <property type="evidence" value="ECO:0007669"/>
    <property type="project" value="UniProtKB-UniRule"/>
</dbReference>
<dbReference type="GO" id="GO:0005524">
    <property type="term" value="F:ATP binding"/>
    <property type="evidence" value="ECO:0007669"/>
    <property type="project" value="UniProtKB-UniRule"/>
</dbReference>
<dbReference type="GO" id="GO:0003676">
    <property type="term" value="F:nucleic acid binding"/>
    <property type="evidence" value="ECO:0007669"/>
    <property type="project" value="InterPro"/>
</dbReference>
<dbReference type="GO" id="GO:0006421">
    <property type="term" value="P:asparaginyl-tRNA aminoacylation"/>
    <property type="evidence" value="ECO:0007669"/>
    <property type="project" value="UniProtKB-UniRule"/>
</dbReference>
<dbReference type="CDD" id="cd00776">
    <property type="entry name" value="AsxRS_core"/>
    <property type="match status" value="1"/>
</dbReference>
<dbReference type="CDD" id="cd04318">
    <property type="entry name" value="EcAsnRS_like_N"/>
    <property type="match status" value="1"/>
</dbReference>
<dbReference type="FunFam" id="3.30.930.10:FF:000016">
    <property type="entry name" value="Asparagine--tRNA ligase"/>
    <property type="match status" value="1"/>
</dbReference>
<dbReference type="Gene3D" id="3.30.930.10">
    <property type="entry name" value="Bira Bifunctional Protein, Domain 2"/>
    <property type="match status" value="1"/>
</dbReference>
<dbReference type="Gene3D" id="2.40.50.140">
    <property type="entry name" value="Nucleic acid-binding proteins"/>
    <property type="match status" value="1"/>
</dbReference>
<dbReference type="HAMAP" id="MF_00534">
    <property type="entry name" value="Asn_tRNA_synth"/>
    <property type="match status" value="1"/>
</dbReference>
<dbReference type="InterPro" id="IPR004364">
    <property type="entry name" value="Aa-tRNA-synt_II"/>
</dbReference>
<dbReference type="InterPro" id="IPR006195">
    <property type="entry name" value="aa-tRNA-synth_II"/>
</dbReference>
<dbReference type="InterPro" id="IPR045864">
    <property type="entry name" value="aa-tRNA-synth_II/BPL/LPL"/>
</dbReference>
<dbReference type="InterPro" id="IPR004522">
    <property type="entry name" value="Asn-tRNA-ligase"/>
</dbReference>
<dbReference type="InterPro" id="IPR002312">
    <property type="entry name" value="Asp/Asn-tRNA-synth_IIb"/>
</dbReference>
<dbReference type="InterPro" id="IPR012340">
    <property type="entry name" value="NA-bd_OB-fold"/>
</dbReference>
<dbReference type="InterPro" id="IPR004365">
    <property type="entry name" value="NA-bd_OB_tRNA"/>
</dbReference>
<dbReference type="NCBIfam" id="TIGR00457">
    <property type="entry name" value="asnS"/>
    <property type="match status" value="1"/>
</dbReference>
<dbReference type="NCBIfam" id="NF003037">
    <property type="entry name" value="PRK03932.1"/>
    <property type="match status" value="1"/>
</dbReference>
<dbReference type="PANTHER" id="PTHR22594:SF34">
    <property type="entry name" value="ASPARAGINE--TRNA LIGASE, MITOCHONDRIAL-RELATED"/>
    <property type="match status" value="1"/>
</dbReference>
<dbReference type="PANTHER" id="PTHR22594">
    <property type="entry name" value="ASPARTYL/LYSYL-TRNA SYNTHETASE"/>
    <property type="match status" value="1"/>
</dbReference>
<dbReference type="Pfam" id="PF00152">
    <property type="entry name" value="tRNA-synt_2"/>
    <property type="match status" value="1"/>
</dbReference>
<dbReference type="Pfam" id="PF01336">
    <property type="entry name" value="tRNA_anti-codon"/>
    <property type="match status" value="1"/>
</dbReference>
<dbReference type="PRINTS" id="PR01042">
    <property type="entry name" value="TRNASYNTHASP"/>
</dbReference>
<dbReference type="SUPFAM" id="SSF55681">
    <property type="entry name" value="Class II aaRS and biotin synthetases"/>
    <property type="match status" value="1"/>
</dbReference>
<dbReference type="SUPFAM" id="SSF50249">
    <property type="entry name" value="Nucleic acid-binding proteins"/>
    <property type="match status" value="1"/>
</dbReference>
<dbReference type="PROSITE" id="PS50862">
    <property type="entry name" value="AA_TRNA_LIGASE_II"/>
    <property type="match status" value="1"/>
</dbReference>
<proteinExistence type="inferred from homology"/>
<keyword id="KW-0030">Aminoacyl-tRNA synthetase</keyword>
<keyword id="KW-0067">ATP-binding</keyword>
<keyword id="KW-0963">Cytoplasm</keyword>
<keyword id="KW-0436">Ligase</keyword>
<keyword id="KW-0547">Nucleotide-binding</keyword>
<keyword id="KW-0648">Protein biosynthesis</keyword>
<keyword id="KW-1185">Reference proteome</keyword>
<reference key="1">
    <citation type="journal article" date="2009" name="J. Bacteriol.">
        <title>Complete genome sequence of Haemophilus parasuis SH0165.</title>
        <authorList>
            <person name="Yue M."/>
            <person name="Yang F."/>
            <person name="Yang J."/>
            <person name="Bei W."/>
            <person name="Cai X."/>
            <person name="Chen L."/>
            <person name="Dong J."/>
            <person name="Zhou R."/>
            <person name="Jin M."/>
            <person name="Jin Q."/>
            <person name="Chen H."/>
        </authorList>
    </citation>
    <scope>NUCLEOTIDE SEQUENCE [LARGE SCALE GENOMIC DNA]</scope>
    <source>
        <strain>SH0165</strain>
    </source>
</reference>
<feature type="chain" id="PRO_1000211902" description="Asparagine--tRNA ligase">
    <location>
        <begin position="1"/>
        <end position="467"/>
    </location>
</feature>
<name>SYN_GLAP5</name>
<accession>B8F3Y5</accession>
<comment type="catalytic activity">
    <reaction evidence="1">
        <text>tRNA(Asn) + L-asparagine + ATP = L-asparaginyl-tRNA(Asn) + AMP + diphosphate + H(+)</text>
        <dbReference type="Rhea" id="RHEA:11180"/>
        <dbReference type="Rhea" id="RHEA-COMP:9659"/>
        <dbReference type="Rhea" id="RHEA-COMP:9674"/>
        <dbReference type="ChEBI" id="CHEBI:15378"/>
        <dbReference type="ChEBI" id="CHEBI:30616"/>
        <dbReference type="ChEBI" id="CHEBI:33019"/>
        <dbReference type="ChEBI" id="CHEBI:58048"/>
        <dbReference type="ChEBI" id="CHEBI:78442"/>
        <dbReference type="ChEBI" id="CHEBI:78515"/>
        <dbReference type="ChEBI" id="CHEBI:456215"/>
        <dbReference type="EC" id="6.1.1.22"/>
    </reaction>
</comment>
<comment type="subunit">
    <text evidence="1">Homodimer.</text>
</comment>
<comment type="subcellular location">
    <subcellularLocation>
        <location evidence="1">Cytoplasm</location>
    </subcellularLocation>
</comment>
<comment type="similarity">
    <text evidence="1">Belongs to the class-II aminoacyl-tRNA synthetase family.</text>
</comment>
<organism>
    <name type="scientific">Glaesserella parasuis serovar 5 (strain SH0165)</name>
    <name type="common">Haemophilus parasuis</name>
    <dbReference type="NCBI Taxonomy" id="557723"/>
    <lineage>
        <taxon>Bacteria</taxon>
        <taxon>Pseudomonadati</taxon>
        <taxon>Pseudomonadota</taxon>
        <taxon>Gammaproteobacteria</taxon>
        <taxon>Pasteurellales</taxon>
        <taxon>Pasteurellaceae</taxon>
        <taxon>Glaesserella</taxon>
    </lineage>
</organism>
<gene>
    <name evidence="1" type="primary">asnS</name>
    <name type="ordered locus">HAPS_0354</name>
</gene>
<evidence type="ECO:0000255" key="1">
    <source>
        <dbReference type="HAMAP-Rule" id="MF_00534"/>
    </source>
</evidence>
<protein>
    <recommendedName>
        <fullName evidence="1">Asparagine--tRNA ligase</fullName>
        <ecNumber evidence="1">6.1.1.22</ecNumber>
    </recommendedName>
    <alternativeName>
        <fullName evidence="1">Asparaginyl-tRNA synthetase</fullName>
        <shortName evidence="1">AsnRS</shortName>
    </alternativeName>
</protein>